<dbReference type="EC" id="2.4.1.227" evidence="1"/>
<dbReference type="EMBL" id="AE016827">
    <property type="protein sequence ID" value="AAU38274.1"/>
    <property type="molecule type" value="Genomic_DNA"/>
</dbReference>
<dbReference type="RefSeq" id="WP_011200835.1">
    <property type="nucleotide sequence ID" value="NC_006300.1"/>
</dbReference>
<dbReference type="SMR" id="Q65RY6"/>
<dbReference type="STRING" id="221988.MS1667"/>
<dbReference type="CAZy" id="GT28">
    <property type="family name" value="Glycosyltransferase Family 28"/>
</dbReference>
<dbReference type="KEGG" id="msu:MS1667"/>
<dbReference type="eggNOG" id="COG0707">
    <property type="taxonomic scope" value="Bacteria"/>
</dbReference>
<dbReference type="HOGENOM" id="CLU_037404_2_0_6"/>
<dbReference type="OrthoDB" id="9808936at2"/>
<dbReference type="UniPathway" id="UPA00219"/>
<dbReference type="Proteomes" id="UP000000607">
    <property type="component" value="Chromosome"/>
</dbReference>
<dbReference type="GO" id="GO:0005886">
    <property type="term" value="C:plasma membrane"/>
    <property type="evidence" value="ECO:0007669"/>
    <property type="project" value="UniProtKB-SubCell"/>
</dbReference>
<dbReference type="GO" id="GO:0051991">
    <property type="term" value="F:UDP-N-acetyl-D-glucosamine:N-acetylmuramoyl-L-alanyl-D-glutamyl-meso-2,6-diaminopimelyl-D-alanyl-D-alanine-diphosphoundecaprenol 4-beta-N-acetylglucosaminlytransferase activity"/>
    <property type="evidence" value="ECO:0007669"/>
    <property type="project" value="RHEA"/>
</dbReference>
<dbReference type="GO" id="GO:0050511">
    <property type="term" value="F:undecaprenyldiphospho-muramoylpentapeptide beta-N-acetylglucosaminyltransferase activity"/>
    <property type="evidence" value="ECO:0007669"/>
    <property type="project" value="UniProtKB-UniRule"/>
</dbReference>
<dbReference type="GO" id="GO:0005975">
    <property type="term" value="P:carbohydrate metabolic process"/>
    <property type="evidence" value="ECO:0007669"/>
    <property type="project" value="InterPro"/>
</dbReference>
<dbReference type="GO" id="GO:0051301">
    <property type="term" value="P:cell division"/>
    <property type="evidence" value="ECO:0007669"/>
    <property type="project" value="UniProtKB-KW"/>
</dbReference>
<dbReference type="GO" id="GO:0071555">
    <property type="term" value="P:cell wall organization"/>
    <property type="evidence" value="ECO:0007669"/>
    <property type="project" value="UniProtKB-KW"/>
</dbReference>
<dbReference type="GO" id="GO:0030259">
    <property type="term" value="P:lipid glycosylation"/>
    <property type="evidence" value="ECO:0007669"/>
    <property type="project" value="UniProtKB-UniRule"/>
</dbReference>
<dbReference type="GO" id="GO:0009252">
    <property type="term" value="P:peptidoglycan biosynthetic process"/>
    <property type="evidence" value="ECO:0007669"/>
    <property type="project" value="UniProtKB-UniRule"/>
</dbReference>
<dbReference type="GO" id="GO:0008360">
    <property type="term" value="P:regulation of cell shape"/>
    <property type="evidence" value="ECO:0007669"/>
    <property type="project" value="UniProtKB-KW"/>
</dbReference>
<dbReference type="CDD" id="cd03785">
    <property type="entry name" value="GT28_MurG"/>
    <property type="match status" value="1"/>
</dbReference>
<dbReference type="Gene3D" id="3.40.50.2000">
    <property type="entry name" value="Glycogen Phosphorylase B"/>
    <property type="match status" value="2"/>
</dbReference>
<dbReference type="HAMAP" id="MF_00033">
    <property type="entry name" value="MurG"/>
    <property type="match status" value="1"/>
</dbReference>
<dbReference type="InterPro" id="IPR006009">
    <property type="entry name" value="GlcNAc_MurG"/>
</dbReference>
<dbReference type="InterPro" id="IPR007235">
    <property type="entry name" value="Glyco_trans_28_C"/>
</dbReference>
<dbReference type="InterPro" id="IPR004276">
    <property type="entry name" value="GlycoTrans_28_N"/>
</dbReference>
<dbReference type="NCBIfam" id="TIGR01133">
    <property type="entry name" value="murG"/>
    <property type="match status" value="1"/>
</dbReference>
<dbReference type="PANTHER" id="PTHR21015:SF22">
    <property type="entry name" value="GLYCOSYLTRANSFERASE"/>
    <property type="match status" value="1"/>
</dbReference>
<dbReference type="PANTHER" id="PTHR21015">
    <property type="entry name" value="UDP-N-ACETYLGLUCOSAMINE--N-ACETYLMURAMYL-(PENTAPEPTIDE) PYROPHOSPHORYL-UNDECAPRENOL N-ACETYLGLUCOSAMINE TRANSFERASE 1"/>
    <property type="match status" value="1"/>
</dbReference>
<dbReference type="Pfam" id="PF04101">
    <property type="entry name" value="Glyco_tran_28_C"/>
    <property type="match status" value="1"/>
</dbReference>
<dbReference type="Pfam" id="PF03033">
    <property type="entry name" value="Glyco_transf_28"/>
    <property type="match status" value="1"/>
</dbReference>
<dbReference type="SUPFAM" id="SSF53756">
    <property type="entry name" value="UDP-Glycosyltransferase/glycogen phosphorylase"/>
    <property type="match status" value="1"/>
</dbReference>
<feature type="chain" id="PRO_0000109186" description="UDP-N-acetylglucosamine--N-acetylmuramyl-(pentapeptide) pyrophosphoryl-undecaprenol N-acetylglucosamine transferase">
    <location>
        <begin position="1"/>
        <end position="355"/>
    </location>
</feature>
<feature type="binding site" evidence="1">
    <location>
        <begin position="14"/>
        <end position="16"/>
    </location>
    <ligand>
        <name>UDP-N-acetyl-alpha-D-glucosamine</name>
        <dbReference type="ChEBI" id="CHEBI:57705"/>
    </ligand>
</feature>
<feature type="binding site" evidence="1">
    <location>
        <position position="126"/>
    </location>
    <ligand>
        <name>UDP-N-acetyl-alpha-D-glucosamine</name>
        <dbReference type="ChEBI" id="CHEBI:57705"/>
    </ligand>
</feature>
<feature type="binding site" evidence="1">
    <location>
        <position position="162"/>
    </location>
    <ligand>
        <name>UDP-N-acetyl-alpha-D-glucosamine</name>
        <dbReference type="ChEBI" id="CHEBI:57705"/>
    </ligand>
</feature>
<feature type="binding site" evidence="1">
    <location>
        <position position="190"/>
    </location>
    <ligand>
        <name>UDP-N-acetyl-alpha-D-glucosamine</name>
        <dbReference type="ChEBI" id="CHEBI:57705"/>
    </ligand>
</feature>
<feature type="binding site" evidence="1">
    <location>
        <position position="245"/>
    </location>
    <ligand>
        <name>UDP-N-acetyl-alpha-D-glucosamine</name>
        <dbReference type="ChEBI" id="CHEBI:57705"/>
    </ligand>
</feature>
<feature type="binding site" evidence="1">
    <location>
        <begin position="264"/>
        <end position="269"/>
    </location>
    <ligand>
        <name>UDP-N-acetyl-alpha-D-glucosamine</name>
        <dbReference type="ChEBI" id="CHEBI:57705"/>
    </ligand>
</feature>
<feature type="binding site" evidence="1">
    <location>
        <position position="289"/>
    </location>
    <ligand>
        <name>UDP-N-acetyl-alpha-D-glucosamine</name>
        <dbReference type="ChEBI" id="CHEBI:57705"/>
    </ligand>
</feature>
<protein>
    <recommendedName>
        <fullName evidence="1">UDP-N-acetylglucosamine--N-acetylmuramyl-(pentapeptide) pyrophosphoryl-undecaprenol N-acetylglucosamine transferase</fullName>
        <ecNumber evidence="1">2.4.1.227</ecNumber>
    </recommendedName>
    <alternativeName>
        <fullName evidence="1">Undecaprenyl-PP-MurNAc-pentapeptide-UDPGlcNAc GlcNAc transferase</fullName>
    </alternativeName>
</protein>
<proteinExistence type="inferred from homology"/>
<name>MURG_MANSM</name>
<comment type="function">
    <text evidence="1">Cell wall formation. Catalyzes the transfer of a GlcNAc subunit on undecaprenyl-pyrophosphoryl-MurNAc-pentapeptide (lipid intermediate I) to form undecaprenyl-pyrophosphoryl-MurNAc-(pentapeptide)GlcNAc (lipid intermediate II).</text>
</comment>
<comment type="catalytic activity">
    <reaction evidence="1">
        <text>di-trans,octa-cis-undecaprenyl diphospho-N-acetyl-alpha-D-muramoyl-L-alanyl-D-glutamyl-meso-2,6-diaminopimeloyl-D-alanyl-D-alanine + UDP-N-acetyl-alpha-D-glucosamine = di-trans,octa-cis-undecaprenyl diphospho-[N-acetyl-alpha-D-glucosaminyl-(1-&gt;4)]-N-acetyl-alpha-D-muramoyl-L-alanyl-D-glutamyl-meso-2,6-diaminopimeloyl-D-alanyl-D-alanine + UDP + H(+)</text>
        <dbReference type="Rhea" id="RHEA:31227"/>
        <dbReference type="ChEBI" id="CHEBI:15378"/>
        <dbReference type="ChEBI" id="CHEBI:57705"/>
        <dbReference type="ChEBI" id="CHEBI:58223"/>
        <dbReference type="ChEBI" id="CHEBI:61387"/>
        <dbReference type="ChEBI" id="CHEBI:61388"/>
        <dbReference type="EC" id="2.4.1.227"/>
    </reaction>
</comment>
<comment type="pathway">
    <text evidence="1">Cell wall biogenesis; peptidoglycan biosynthesis.</text>
</comment>
<comment type="subcellular location">
    <subcellularLocation>
        <location evidence="1">Cell inner membrane</location>
        <topology evidence="1">Peripheral membrane protein</topology>
        <orientation evidence="1">Cytoplasmic side</orientation>
    </subcellularLocation>
</comment>
<comment type="similarity">
    <text evidence="1">Belongs to the glycosyltransferase 28 family. MurG subfamily.</text>
</comment>
<organism>
    <name type="scientific">Mannheimia succiniciproducens (strain KCTC 0769BP / MBEL55E)</name>
    <dbReference type="NCBI Taxonomy" id="221988"/>
    <lineage>
        <taxon>Bacteria</taxon>
        <taxon>Pseudomonadati</taxon>
        <taxon>Pseudomonadota</taxon>
        <taxon>Gammaproteobacteria</taxon>
        <taxon>Pasteurellales</taxon>
        <taxon>Pasteurellaceae</taxon>
        <taxon>Basfia</taxon>
    </lineage>
</organism>
<reference key="1">
    <citation type="journal article" date="2004" name="Nat. Biotechnol.">
        <title>The genome sequence of the capnophilic rumen bacterium Mannheimia succiniciproducens.</title>
        <authorList>
            <person name="Hong S.H."/>
            <person name="Kim J.S."/>
            <person name="Lee S.Y."/>
            <person name="In Y.H."/>
            <person name="Choi S.S."/>
            <person name="Rih J.-K."/>
            <person name="Kim C.H."/>
            <person name="Jeong H."/>
            <person name="Hur C.G."/>
            <person name="Kim J.J."/>
        </authorList>
    </citation>
    <scope>NUCLEOTIDE SEQUENCE [LARGE SCALE GENOMIC DNA]</scope>
    <source>
        <strain>KCTC 0769BP / MBEL55E</strain>
    </source>
</reference>
<evidence type="ECO:0000255" key="1">
    <source>
        <dbReference type="HAMAP-Rule" id="MF_00033"/>
    </source>
</evidence>
<sequence length="355" mass="38279">MAQRKKLLVMAGGTGGHVFPAIAVAQYLQKQGWDICWLGTKDRMEAQLVPKHGIPIEFIQISGLRGKGIKALLGAPFAICRAIMQARKIILRQKPDAVLGMGGYVSGPGGVAAKLCGVPVILHEQNAVAGLTNVWLSKIAKRVLQAFPTAFPNAEVVGNPVRQDLFSMPDPEQRFAERTGKLRVLVVGGSQGARVLNLTVPEMAARLTDKLEIRHQVGAGSVEKITALYEEKGALSADVKITEFIDNMAEAYAWADIVICRSGALTVCELAAVGTPAIFVPFRHKDQQQYLNAKYLADVGAAKIVQQAELNADVLVDLLTNLDREQLLAMAIKAKQMSAPFAAQRVAEVIIENAN</sequence>
<gene>
    <name evidence="1" type="primary">murG</name>
    <name type="ordered locus">MS1667</name>
</gene>
<accession>Q65RY6</accession>
<keyword id="KW-0131">Cell cycle</keyword>
<keyword id="KW-0132">Cell division</keyword>
<keyword id="KW-0997">Cell inner membrane</keyword>
<keyword id="KW-1003">Cell membrane</keyword>
<keyword id="KW-0133">Cell shape</keyword>
<keyword id="KW-0961">Cell wall biogenesis/degradation</keyword>
<keyword id="KW-0328">Glycosyltransferase</keyword>
<keyword id="KW-0472">Membrane</keyword>
<keyword id="KW-0573">Peptidoglycan synthesis</keyword>
<keyword id="KW-0808">Transferase</keyword>